<organism>
    <name type="scientific">Thermobispora bispora</name>
    <name type="common">Microbispora bispora</name>
    <dbReference type="NCBI Taxonomy" id="2006"/>
    <lineage>
        <taxon>Bacteria</taxon>
        <taxon>Bacillati</taxon>
        <taxon>Actinomycetota</taxon>
        <taxon>Actinomycetes</taxon>
        <taxon>Streptosporangiales</taxon>
        <taxon>Streptosporangiaceae</taxon>
        <taxon>Thermobispora</taxon>
    </lineage>
</organism>
<name>GUNA_THEBI</name>
<protein>
    <recommendedName>
        <fullName>Endoglucanase A</fullName>
        <ecNumber>3.2.1.4</ecNumber>
    </recommendedName>
    <alternativeName>
        <fullName>Cellulase A</fullName>
    </alternativeName>
    <alternativeName>
        <fullName>Endo-1,4-beta-glucanase A</fullName>
    </alternativeName>
</protein>
<gene>
    <name type="primary">celA</name>
</gene>
<accession>P26414</accession>
<evidence type="ECO:0000250" key="1"/>
<evidence type="ECO:0000255" key="2"/>
<evidence type="ECO:0000255" key="3">
    <source>
        <dbReference type="PROSITE-ProRule" id="PRU01135"/>
    </source>
</evidence>
<evidence type="ECO:0000255" key="4">
    <source>
        <dbReference type="PROSITE-ProRule" id="PRU10056"/>
    </source>
</evidence>
<evidence type="ECO:0000255" key="5">
    <source>
        <dbReference type="PROSITE-ProRule" id="PRU10057"/>
    </source>
</evidence>
<evidence type="ECO:0000256" key="6">
    <source>
        <dbReference type="SAM" id="MobiDB-lite"/>
    </source>
</evidence>
<evidence type="ECO:0000305" key="7"/>
<comment type="catalytic activity">
    <reaction>
        <text>Endohydrolysis of (1-&gt;4)-beta-D-glucosidic linkages in cellulose, lichenin and cereal beta-D-glucans.</text>
        <dbReference type="EC" id="3.2.1.4"/>
    </reaction>
</comment>
<comment type="similarity">
    <text evidence="7">Belongs to the glycosyl hydrolase 6 (cellulase B) family.</text>
</comment>
<sequence length="456" mass="47011">MSRIRRFLATALAAATAGVGAIVTAIASAGPAHAYDSPFYVDPQSNAAKWVAANPNDPRTPVIRDRIAAVPTGRWFANYNPSTVRAEVDAYVGAAAAAGKIPIMVVYAMPNRDCGGPSAGGAPNHTAYRAWIDEIAAGLRNRPAVIILEPDALPIMTNCMSPSEQAEVQASAVGAGKKFKAASSQAKVYFDAGHDAWVPADEMASRLRGADIANSADGIALNVSNYRYTSGLISYAKSVLSAIGASHLRAVIDTSRNGNGPLGSEWCDPPGRATGTWSTTDTGDPAIDAFLWIKPPGEADGCIATPGVFVPDRAYELAMNAAPPTYSPSPTPSTPSPSPSQSDPGSPSPSPSQPPAGRACEATYALVNQWPGGFQAEVTVKNTGSSPINGWTVQWTLPSGQSITQLWNGDLSTSGSNVTVRNVSWNGNVPAGGSTSFGFLGSGTGQLSSSITCSAS</sequence>
<keyword id="KW-0119">Carbohydrate metabolism</keyword>
<keyword id="KW-0136">Cellulose degradation</keyword>
<keyword id="KW-1015">Disulfide bond</keyword>
<keyword id="KW-0326">Glycosidase</keyword>
<keyword id="KW-0378">Hydrolase</keyword>
<keyword id="KW-0624">Polysaccharide degradation</keyword>
<keyword id="KW-0732">Signal</keyword>
<reference key="1">
    <citation type="book" date="1989" name="Production, characterization and application of cellulose, hemicellulose and lignin enzyme degrading systems">
        <editorList>
            <person name="Coughlan M.P."/>
        </editorList>
        <authorList>
            <person name="Yablonsky M.D."/>
            <person name="Elliston K.O."/>
            <person name="Eveleigh D.E."/>
        </authorList>
    </citation>
    <scope>NUCLEOTIDE SEQUENCE [GENOMIC DNA]</scope>
</reference>
<dbReference type="EC" id="3.2.1.4"/>
<dbReference type="SMR" id="P26414"/>
<dbReference type="CAZy" id="CBM2">
    <property type="family name" value="Carbohydrate-Binding Module Family 2"/>
</dbReference>
<dbReference type="CAZy" id="GH6">
    <property type="family name" value="Glycoside Hydrolase Family 6"/>
</dbReference>
<dbReference type="GO" id="GO:0008810">
    <property type="term" value="F:cellulase activity"/>
    <property type="evidence" value="ECO:0007669"/>
    <property type="project" value="UniProtKB-EC"/>
</dbReference>
<dbReference type="GO" id="GO:0030247">
    <property type="term" value="F:polysaccharide binding"/>
    <property type="evidence" value="ECO:0007669"/>
    <property type="project" value="InterPro"/>
</dbReference>
<dbReference type="GO" id="GO:0030245">
    <property type="term" value="P:cellulose catabolic process"/>
    <property type="evidence" value="ECO:0007669"/>
    <property type="project" value="UniProtKB-KW"/>
</dbReference>
<dbReference type="Gene3D" id="2.60.40.290">
    <property type="match status" value="1"/>
</dbReference>
<dbReference type="Gene3D" id="3.20.20.40">
    <property type="entry name" value="1, 4-beta cellobiohydrolase"/>
    <property type="match status" value="1"/>
</dbReference>
<dbReference type="InterPro" id="IPR016288">
    <property type="entry name" value="Beta_cellobiohydrolase"/>
</dbReference>
<dbReference type="InterPro" id="IPR036434">
    <property type="entry name" value="Beta_cellobiohydrolase_sf"/>
</dbReference>
<dbReference type="InterPro" id="IPR001919">
    <property type="entry name" value="CBD2"/>
</dbReference>
<dbReference type="InterPro" id="IPR008965">
    <property type="entry name" value="CBM2/CBM3_carb-bd_dom_sf"/>
</dbReference>
<dbReference type="InterPro" id="IPR012291">
    <property type="entry name" value="CBM2_carb-bd_dom_sf"/>
</dbReference>
<dbReference type="InterPro" id="IPR018366">
    <property type="entry name" value="CBM2_CS"/>
</dbReference>
<dbReference type="InterPro" id="IPR001524">
    <property type="entry name" value="Glyco_hydro_6_CS"/>
</dbReference>
<dbReference type="PANTHER" id="PTHR34876">
    <property type="match status" value="1"/>
</dbReference>
<dbReference type="PANTHER" id="PTHR34876:SF4">
    <property type="entry name" value="1,4-BETA-D-GLUCAN CELLOBIOHYDROLASE C-RELATED"/>
    <property type="match status" value="1"/>
</dbReference>
<dbReference type="Pfam" id="PF00553">
    <property type="entry name" value="CBM_2"/>
    <property type="match status" value="1"/>
</dbReference>
<dbReference type="Pfam" id="PF01341">
    <property type="entry name" value="Glyco_hydro_6"/>
    <property type="match status" value="1"/>
</dbReference>
<dbReference type="PRINTS" id="PR00733">
    <property type="entry name" value="GLHYDRLASE6"/>
</dbReference>
<dbReference type="SMART" id="SM00637">
    <property type="entry name" value="CBD_II"/>
    <property type="match status" value="1"/>
</dbReference>
<dbReference type="SUPFAM" id="SSF49384">
    <property type="entry name" value="Carbohydrate-binding domain"/>
    <property type="match status" value="1"/>
</dbReference>
<dbReference type="SUPFAM" id="SSF51989">
    <property type="entry name" value="Glycosyl hydrolases family 6, cellulases"/>
    <property type="match status" value="1"/>
</dbReference>
<dbReference type="PROSITE" id="PS51173">
    <property type="entry name" value="CBM2"/>
    <property type="match status" value="1"/>
</dbReference>
<dbReference type="PROSITE" id="PS00561">
    <property type="entry name" value="CBM2_A"/>
    <property type="match status" value="1"/>
</dbReference>
<dbReference type="PROSITE" id="PS00655">
    <property type="entry name" value="GLYCOSYL_HYDROL_F6_1"/>
    <property type="match status" value="1"/>
</dbReference>
<dbReference type="PROSITE" id="PS00656">
    <property type="entry name" value="GLYCOSYL_HYDROL_F6_2"/>
    <property type="match status" value="1"/>
</dbReference>
<proteinExistence type="inferred from homology"/>
<feature type="signal peptide" evidence="2">
    <location>
        <begin position="1"/>
        <end position="30"/>
    </location>
</feature>
<feature type="chain" id="PRO_0000007905" description="Endoglucanase A">
    <location>
        <begin position="31"/>
        <end position="456"/>
    </location>
</feature>
<feature type="domain" description="CBM2" evidence="3">
    <location>
        <begin position="353"/>
        <end position="456"/>
    </location>
</feature>
<feature type="region of interest" description="Catalytic">
    <location>
        <begin position="31"/>
        <end position="322"/>
    </location>
</feature>
<feature type="region of interest" description="Disordered" evidence="6">
    <location>
        <begin position="255"/>
        <end position="280"/>
    </location>
</feature>
<feature type="region of interest" description="Disordered" evidence="6">
    <location>
        <begin position="321"/>
        <end position="358"/>
    </location>
</feature>
<feature type="region of interest" description="Linker ('hinge') (Pro-Ser box)">
    <location>
        <begin position="323"/>
        <end position="355"/>
    </location>
</feature>
<feature type="compositionally biased region" description="Pro residues" evidence="6">
    <location>
        <begin position="325"/>
        <end position="338"/>
    </location>
</feature>
<feature type="active site" evidence="4">
    <location>
        <position position="113"/>
    </location>
</feature>
<feature type="active site" description="Proton donor" evidence="5">
    <location>
        <position position="151"/>
    </location>
</feature>
<feature type="active site" description="Nucleophile" evidence="4">
    <location>
        <position position="300"/>
    </location>
</feature>
<feature type="disulfide bond" evidence="1">
    <location>
        <begin position="114"/>
        <end position="159"/>
    </location>
</feature>
<feature type="disulfide bond" evidence="1">
    <location>
        <begin position="267"/>
        <end position="302"/>
    </location>
</feature>
<feature type="disulfide bond" evidence="1">
    <location>
        <begin position="360"/>
        <end position="453"/>
    </location>
</feature>